<proteinExistence type="inferred from homology"/>
<accession>Q8DJB6</accession>
<feature type="chain" id="PRO_0000223840" description="Acetyl-coenzyme A carboxylase carboxyl transferase subunit alpha">
    <location>
        <begin position="1"/>
        <end position="324"/>
    </location>
</feature>
<feature type="domain" description="CoA carboxyltransferase C-terminal" evidence="2">
    <location>
        <begin position="44"/>
        <end position="297"/>
    </location>
</feature>
<gene>
    <name evidence="1" type="primary">accA</name>
    <name type="ordered locus">tll1311</name>
</gene>
<reference key="1">
    <citation type="journal article" date="2002" name="DNA Res.">
        <title>Complete genome structure of the thermophilic cyanobacterium Thermosynechococcus elongatus BP-1.</title>
        <authorList>
            <person name="Nakamura Y."/>
            <person name="Kaneko T."/>
            <person name="Sato S."/>
            <person name="Ikeuchi M."/>
            <person name="Katoh H."/>
            <person name="Sasamoto S."/>
            <person name="Watanabe A."/>
            <person name="Iriguchi M."/>
            <person name="Kawashima K."/>
            <person name="Kimura T."/>
            <person name="Kishida Y."/>
            <person name="Kiyokawa C."/>
            <person name="Kohara M."/>
            <person name="Matsumoto M."/>
            <person name="Matsuno A."/>
            <person name="Nakazaki N."/>
            <person name="Shimpo S."/>
            <person name="Sugimoto M."/>
            <person name="Takeuchi C."/>
            <person name="Yamada M."/>
            <person name="Tabata S."/>
        </authorList>
    </citation>
    <scope>NUCLEOTIDE SEQUENCE [LARGE SCALE GENOMIC DNA]</scope>
    <source>
        <strain>NIES-2133 / IAM M-273 / BP-1</strain>
    </source>
</reference>
<dbReference type="EC" id="2.1.3.15" evidence="1"/>
<dbReference type="EMBL" id="BA000039">
    <property type="protein sequence ID" value="BAC08863.1"/>
    <property type="molecule type" value="Genomic_DNA"/>
</dbReference>
<dbReference type="RefSeq" id="NP_682101.1">
    <property type="nucleotide sequence ID" value="NC_004113.1"/>
</dbReference>
<dbReference type="RefSeq" id="WP_011057151.1">
    <property type="nucleotide sequence ID" value="NC_004113.1"/>
</dbReference>
<dbReference type="SMR" id="Q8DJB6"/>
<dbReference type="STRING" id="197221.gene:10747909"/>
<dbReference type="EnsemblBacteria" id="BAC08863">
    <property type="protein sequence ID" value="BAC08863"/>
    <property type="gene ID" value="BAC08863"/>
</dbReference>
<dbReference type="KEGG" id="tel:tll1311"/>
<dbReference type="PATRIC" id="fig|197221.4.peg.1379"/>
<dbReference type="eggNOG" id="COG0825">
    <property type="taxonomic scope" value="Bacteria"/>
</dbReference>
<dbReference type="UniPathway" id="UPA00655">
    <property type="reaction ID" value="UER00711"/>
</dbReference>
<dbReference type="Proteomes" id="UP000000440">
    <property type="component" value="Chromosome"/>
</dbReference>
<dbReference type="GO" id="GO:0009317">
    <property type="term" value="C:acetyl-CoA carboxylase complex"/>
    <property type="evidence" value="ECO:0007669"/>
    <property type="project" value="InterPro"/>
</dbReference>
<dbReference type="GO" id="GO:0003989">
    <property type="term" value="F:acetyl-CoA carboxylase activity"/>
    <property type="evidence" value="ECO:0007669"/>
    <property type="project" value="InterPro"/>
</dbReference>
<dbReference type="GO" id="GO:0005524">
    <property type="term" value="F:ATP binding"/>
    <property type="evidence" value="ECO:0007669"/>
    <property type="project" value="UniProtKB-KW"/>
</dbReference>
<dbReference type="GO" id="GO:0016743">
    <property type="term" value="F:carboxyl- or carbamoyltransferase activity"/>
    <property type="evidence" value="ECO:0007669"/>
    <property type="project" value="UniProtKB-UniRule"/>
</dbReference>
<dbReference type="GO" id="GO:0006633">
    <property type="term" value="P:fatty acid biosynthetic process"/>
    <property type="evidence" value="ECO:0007669"/>
    <property type="project" value="UniProtKB-KW"/>
</dbReference>
<dbReference type="GO" id="GO:2001295">
    <property type="term" value="P:malonyl-CoA biosynthetic process"/>
    <property type="evidence" value="ECO:0007669"/>
    <property type="project" value="UniProtKB-UniRule"/>
</dbReference>
<dbReference type="Gene3D" id="3.90.226.10">
    <property type="entry name" value="2-enoyl-CoA Hydratase, Chain A, domain 1"/>
    <property type="match status" value="1"/>
</dbReference>
<dbReference type="HAMAP" id="MF_00823">
    <property type="entry name" value="AcetylCoA_CT_alpha"/>
    <property type="match status" value="1"/>
</dbReference>
<dbReference type="InterPro" id="IPR001095">
    <property type="entry name" value="Acetyl_CoA_COase_a_su"/>
</dbReference>
<dbReference type="InterPro" id="IPR029045">
    <property type="entry name" value="ClpP/crotonase-like_dom_sf"/>
</dbReference>
<dbReference type="InterPro" id="IPR011763">
    <property type="entry name" value="COA_CT_C"/>
</dbReference>
<dbReference type="NCBIfam" id="TIGR00513">
    <property type="entry name" value="accA"/>
    <property type="match status" value="1"/>
</dbReference>
<dbReference type="NCBIfam" id="NF041504">
    <property type="entry name" value="AccA_sub"/>
    <property type="match status" value="1"/>
</dbReference>
<dbReference type="NCBIfam" id="NF004344">
    <property type="entry name" value="PRK05724.1"/>
    <property type="match status" value="1"/>
</dbReference>
<dbReference type="PANTHER" id="PTHR42853">
    <property type="entry name" value="ACETYL-COENZYME A CARBOXYLASE CARBOXYL TRANSFERASE SUBUNIT ALPHA"/>
    <property type="match status" value="1"/>
</dbReference>
<dbReference type="PANTHER" id="PTHR42853:SF3">
    <property type="entry name" value="ACETYL-COENZYME A CARBOXYLASE CARBOXYL TRANSFERASE SUBUNIT ALPHA, CHLOROPLASTIC"/>
    <property type="match status" value="1"/>
</dbReference>
<dbReference type="Pfam" id="PF03255">
    <property type="entry name" value="ACCA"/>
    <property type="match status" value="1"/>
</dbReference>
<dbReference type="PRINTS" id="PR01069">
    <property type="entry name" value="ACCCTRFRASEA"/>
</dbReference>
<dbReference type="SUPFAM" id="SSF52096">
    <property type="entry name" value="ClpP/crotonase"/>
    <property type="match status" value="1"/>
</dbReference>
<dbReference type="PROSITE" id="PS50989">
    <property type="entry name" value="COA_CT_CTER"/>
    <property type="match status" value="1"/>
</dbReference>
<sequence length="324" mass="36001">MANERRTLLLEFEKPLVELEAQIQQVRDKSSEFGVDVSEQIRELEERAKQLRYEIFSKLTPGQTLQVARHPRRPSTLDYIQAISEEWIELHGDRRGSDDPAIVGGIGRLNDQPVVMLGQQKGRDTKDNVARNFGMASPGGYRKALRLMEHANRFQMPILTFIDTPAAWAGVDAEKFGQGEAIAYNLREMFRFEVPIICTVIGEGGSGGALAIGVGDRLLMFEHAVYSVAPPEACAAILWRDAQKAPQAAEALKITARDLLKLGIIDEIVPEPVGAAHSNPVEAAENLKAALLRNLAEVQALSSSERRELRYQKFRRMGVFTEAV</sequence>
<comment type="function">
    <text evidence="1">Component of the acetyl coenzyme A carboxylase (ACC) complex. First, biotin carboxylase catalyzes the carboxylation of biotin on its carrier protein (BCCP) and then the CO(2) group is transferred by the carboxyltransferase to acetyl-CoA to form malonyl-CoA.</text>
</comment>
<comment type="catalytic activity">
    <reaction evidence="1">
        <text>N(6)-carboxybiotinyl-L-lysyl-[protein] + acetyl-CoA = N(6)-biotinyl-L-lysyl-[protein] + malonyl-CoA</text>
        <dbReference type="Rhea" id="RHEA:54728"/>
        <dbReference type="Rhea" id="RHEA-COMP:10505"/>
        <dbReference type="Rhea" id="RHEA-COMP:10506"/>
        <dbReference type="ChEBI" id="CHEBI:57288"/>
        <dbReference type="ChEBI" id="CHEBI:57384"/>
        <dbReference type="ChEBI" id="CHEBI:83144"/>
        <dbReference type="ChEBI" id="CHEBI:83145"/>
        <dbReference type="EC" id="2.1.3.15"/>
    </reaction>
</comment>
<comment type="pathway">
    <text evidence="1">Lipid metabolism; malonyl-CoA biosynthesis; malonyl-CoA from acetyl-CoA: step 1/1.</text>
</comment>
<comment type="subunit">
    <text evidence="1">Acetyl-CoA carboxylase is a heterohexamer composed of biotin carboxyl carrier protein (AccB), biotin carboxylase (AccC) and two subunits each of ACCase subunit alpha (AccA) and ACCase subunit beta (AccD).</text>
</comment>
<comment type="subcellular location">
    <subcellularLocation>
        <location evidence="1">Cytoplasm</location>
    </subcellularLocation>
</comment>
<comment type="similarity">
    <text evidence="1">Belongs to the AccA family.</text>
</comment>
<name>ACCA_THEVB</name>
<protein>
    <recommendedName>
        <fullName evidence="1">Acetyl-coenzyme A carboxylase carboxyl transferase subunit alpha</fullName>
        <shortName evidence="1">ACCase subunit alpha</shortName>
        <shortName evidence="1">Acetyl-CoA carboxylase carboxyltransferase subunit alpha</shortName>
        <ecNumber evidence="1">2.1.3.15</ecNumber>
    </recommendedName>
</protein>
<evidence type="ECO:0000255" key="1">
    <source>
        <dbReference type="HAMAP-Rule" id="MF_00823"/>
    </source>
</evidence>
<evidence type="ECO:0000255" key="2">
    <source>
        <dbReference type="PROSITE-ProRule" id="PRU01137"/>
    </source>
</evidence>
<keyword id="KW-0067">ATP-binding</keyword>
<keyword id="KW-0963">Cytoplasm</keyword>
<keyword id="KW-0275">Fatty acid biosynthesis</keyword>
<keyword id="KW-0276">Fatty acid metabolism</keyword>
<keyword id="KW-0444">Lipid biosynthesis</keyword>
<keyword id="KW-0443">Lipid metabolism</keyword>
<keyword id="KW-0547">Nucleotide-binding</keyword>
<keyword id="KW-1185">Reference proteome</keyword>
<keyword id="KW-0808">Transferase</keyword>
<organism>
    <name type="scientific">Thermosynechococcus vestitus (strain NIES-2133 / IAM M-273 / BP-1)</name>
    <dbReference type="NCBI Taxonomy" id="197221"/>
    <lineage>
        <taxon>Bacteria</taxon>
        <taxon>Bacillati</taxon>
        <taxon>Cyanobacteriota</taxon>
        <taxon>Cyanophyceae</taxon>
        <taxon>Acaryochloridales</taxon>
        <taxon>Thermosynechococcaceae</taxon>
        <taxon>Thermosynechococcus</taxon>
    </lineage>
</organism>